<reference key="1">
    <citation type="journal article" date="2015" name="Genome Announc.">
        <title>Draft genome sequence of the cellulolytic fungus Chaetomium globosum.</title>
        <authorList>
            <person name="Cuomo C.A."/>
            <person name="Untereiner W.A."/>
            <person name="Ma L.-J."/>
            <person name="Grabherr M."/>
            <person name="Birren B.W."/>
        </authorList>
    </citation>
    <scope>NUCLEOTIDE SEQUENCE [LARGE SCALE GENOMIC DNA]</scope>
    <source>
        <strain>ATCC 6205 / CBS 148.51 / DSM 1962 / NBRC 6347 / NRRL 1970</strain>
    </source>
</reference>
<feature type="chain" id="PRO_0000410368" description="High osmolarity signaling protein SHO1">
    <location>
        <begin position="1"/>
        <end position="297"/>
    </location>
</feature>
<feature type="topological domain" description="Cytoplasmic" evidence="2">
    <location>
        <begin position="1"/>
        <end position="23"/>
    </location>
</feature>
<feature type="transmembrane region" description="Helical" evidence="2">
    <location>
        <begin position="24"/>
        <end position="44"/>
    </location>
</feature>
<feature type="topological domain" description="Extracellular" evidence="2">
    <location>
        <begin position="45"/>
        <end position="54"/>
    </location>
</feature>
<feature type="transmembrane region" description="Helical" evidence="2">
    <location>
        <begin position="55"/>
        <end position="75"/>
    </location>
</feature>
<feature type="topological domain" description="Cytoplasmic" evidence="2">
    <location>
        <begin position="76"/>
        <end position="81"/>
    </location>
</feature>
<feature type="transmembrane region" description="Helical" evidence="2">
    <location>
        <begin position="82"/>
        <end position="102"/>
    </location>
</feature>
<feature type="topological domain" description="Extracellular" evidence="2">
    <location>
        <begin position="103"/>
        <end position="114"/>
    </location>
</feature>
<feature type="transmembrane region" description="Helical" evidence="2">
    <location>
        <begin position="115"/>
        <end position="135"/>
    </location>
</feature>
<feature type="topological domain" description="Cytoplasmic" evidence="2">
    <location>
        <begin position="136"/>
        <end position="297"/>
    </location>
</feature>
<feature type="domain" description="SH3" evidence="3">
    <location>
        <begin position="238"/>
        <end position="297"/>
    </location>
</feature>
<gene>
    <name type="primary">SHO1</name>
    <name type="ORF">CHGG_06778</name>
</gene>
<organism>
    <name type="scientific">Chaetomium globosum (strain ATCC 6205 / CBS 148.51 / DSM 1962 / NBRC 6347 / NRRL 1970)</name>
    <name type="common">Soil fungus</name>
    <dbReference type="NCBI Taxonomy" id="306901"/>
    <lineage>
        <taxon>Eukaryota</taxon>
        <taxon>Fungi</taxon>
        <taxon>Dikarya</taxon>
        <taxon>Ascomycota</taxon>
        <taxon>Pezizomycotina</taxon>
        <taxon>Sordariomycetes</taxon>
        <taxon>Sordariomycetidae</taxon>
        <taxon>Sordariales</taxon>
        <taxon>Chaetomiaceae</taxon>
        <taxon>Chaetomium</taxon>
    </lineage>
</organism>
<accession>Q2H3I7</accession>
<name>SHO1_CHAGB</name>
<keyword id="KW-1003">Cell membrane</keyword>
<keyword id="KW-0472">Membrane</keyword>
<keyword id="KW-1185">Reference proteome</keyword>
<keyword id="KW-0728">SH3 domain</keyword>
<keyword id="KW-0346">Stress response</keyword>
<keyword id="KW-0812">Transmembrane</keyword>
<keyword id="KW-1133">Transmembrane helix</keyword>
<proteinExistence type="inferred from homology"/>
<protein>
    <recommendedName>
        <fullName>High osmolarity signaling protein SHO1</fullName>
    </recommendedName>
    <alternativeName>
        <fullName>Osmosensor SHO1</fullName>
    </alternativeName>
</protein>
<sequence length="297" mass="32243">MEYSRPQYGRKRMSLGNIIGDPFALATTSIATLAWLISFVATIIAHIQYPVKFPLFAYWALVFYFGLIIGVFVVVASDSTQTYHVALVGYLGCGLVLSTSSVNNLIHDNQGAKEASAAGFILLSMVTIVWIFYFGSAPSAVPRAYIDSFALAKESTSTNRQTMTGGYGGRRPETSTSVQPPQMYTAQLNGLENPSPVGGMTSAMTNPTIPPAYTAPPTQKTAAPNAENPNAEIVPPTEYPYRAKAIYSYEANPEDANEISFSKHEILEVSDVSGRWWQARKESGETGIAPSNYLILL</sequence>
<comment type="function">
    <text evidence="1">Plasma membrane osmosensor that activates the high osmolarity glycerol (HOG) MAPK signaling pathway in response to high osmolarity.</text>
</comment>
<comment type="subunit">
    <text evidence="1">Forms homooligomers.</text>
</comment>
<comment type="subcellular location">
    <subcellularLocation>
        <location evidence="1">Cell membrane</location>
        <topology evidence="1">Multi-pass membrane protein</topology>
    </subcellularLocation>
</comment>
<comment type="similarity">
    <text evidence="4">Belongs to the SHO1 family.</text>
</comment>
<dbReference type="EMBL" id="CH408031">
    <property type="protein sequence ID" value="EAQ90159.1"/>
    <property type="molecule type" value="Genomic_DNA"/>
</dbReference>
<dbReference type="RefSeq" id="XP_001222873.1">
    <property type="nucleotide sequence ID" value="XM_001222872.1"/>
</dbReference>
<dbReference type="SMR" id="Q2H3I7"/>
<dbReference type="FunCoup" id="Q2H3I7">
    <property type="interactions" value="112"/>
</dbReference>
<dbReference type="STRING" id="306901.Q2H3I7"/>
<dbReference type="GeneID" id="4391495"/>
<dbReference type="VEuPathDB" id="FungiDB:CHGG_06778"/>
<dbReference type="eggNOG" id="ENOG502QW7A">
    <property type="taxonomic scope" value="Eukaryota"/>
</dbReference>
<dbReference type="HOGENOM" id="CLU_043316_1_0_1"/>
<dbReference type="InParanoid" id="Q2H3I7"/>
<dbReference type="OMA" id="NIVWIFY"/>
<dbReference type="OrthoDB" id="5983572at2759"/>
<dbReference type="Proteomes" id="UP000001056">
    <property type="component" value="Unassembled WGS sequence"/>
</dbReference>
<dbReference type="GO" id="GO:0005886">
    <property type="term" value="C:plasma membrane"/>
    <property type="evidence" value="ECO:0007669"/>
    <property type="project" value="UniProtKB-SubCell"/>
</dbReference>
<dbReference type="CDD" id="cd11855">
    <property type="entry name" value="SH3_Sho1p"/>
    <property type="match status" value="1"/>
</dbReference>
<dbReference type="FunFam" id="2.30.30.40:FF:000213">
    <property type="entry name" value="High osmolarity signaling protein SHO1"/>
    <property type="match status" value="1"/>
</dbReference>
<dbReference type="Gene3D" id="2.30.30.40">
    <property type="entry name" value="SH3 Domains"/>
    <property type="match status" value="1"/>
</dbReference>
<dbReference type="InterPro" id="IPR036028">
    <property type="entry name" value="SH3-like_dom_sf"/>
</dbReference>
<dbReference type="InterPro" id="IPR001452">
    <property type="entry name" value="SH3_domain"/>
</dbReference>
<dbReference type="InterPro" id="IPR035522">
    <property type="entry name" value="Sho1_SH3"/>
</dbReference>
<dbReference type="Pfam" id="PF00018">
    <property type="entry name" value="SH3_1"/>
    <property type="match status" value="1"/>
</dbReference>
<dbReference type="PRINTS" id="PR00452">
    <property type="entry name" value="SH3DOMAIN"/>
</dbReference>
<dbReference type="SMART" id="SM00326">
    <property type="entry name" value="SH3"/>
    <property type="match status" value="1"/>
</dbReference>
<dbReference type="SUPFAM" id="SSF50044">
    <property type="entry name" value="SH3-domain"/>
    <property type="match status" value="1"/>
</dbReference>
<dbReference type="PROSITE" id="PS50002">
    <property type="entry name" value="SH3"/>
    <property type="match status" value="1"/>
</dbReference>
<evidence type="ECO:0000250" key="1"/>
<evidence type="ECO:0000255" key="2"/>
<evidence type="ECO:0000255" key="3">
    <source>
        <dbReference type="PROSITE-ProRule" id="PRU00192"/>
    </source>
</evidence>
<evidence type="ECO:0000305" key="4"/>